<comment type="function">
    <text evidence="1">The RuvA-RuvB-RuvC complex processes Holliday junction (HJ) DNA during genetic recombination and DNA repair. Endonuclease that resolves HJ intermediates. Cleaves cruciform DNA by making single-stranded nicks across the HJ at symmetrical positions within the homologous arms, yielding a 5'-phosphate and a 3'-hydroxyl group; requires a central core of homology in the junction. The consensus cleavage sequence is 5'-(A/T)TT(C/G)-3'. Cleavage occurs on the 3'-side of the TT dinucleotide at the point of strand exchange. HJ branch migration catalyzed by RuvA-RuvB allows RuvC to scan DNA until it finds its consensus sequence, where it cleaves and resolves the cruciform DNA.</text>
</comment>
<comment type="catalytic activity">
    <reaction evidence="1">
        <text>Endonucleolytic cleavage at a junction such as a reciprocal single-stranded crossover between two homologous DNA duplexes (Holliday junction).</text>
        <dbReference type="EC" id="3.1.21.10"/>
    </reaction>
</comment>
<comment type="cofactor">
    <cofactor evidence="1">
        <name>Mg(2+)</name>
        <dbReference type="ChEBI" id="CHEBI:18420"/>
    </cofactor>
    <text evidence="1">Binds 2 Mg(2+) ion per subunit.</text>
</comment>
<comment type="subunit">
    <text evidence="1">Homodimer which binds Holliday junction (HJ) DNA. The HJ becomes 2-fold symmetrical on binding to RuvC with unstacked arms; it has a different conformation from HJ DNA in complex with RuvA. In the full resolvosome a probable DNA-RuvA(4)-RuvB(12)-RuvC(2) complex forms which resolves the HJ.</text>
</comment>
<comment type="subcellular location">
    <subcellularLocation>
        <location evidence="1">Cytoplasm</location>
    </subcellularLocation>
</comment>
<comment type="similarity">
    <text evidence="1">Belongs to the RuvC family.</text>
</comment>
<comment type="sequence caution" evidence="3">
    <conflict type="erroneous initiation">
        <sequence resource="EMBL-CDS" id="BAC18585"/>
    </conflict>
    <text>Extended N-terminus.</text>
</comment>
<name>RUVC_COREF</name>
<reference key="1">
    <citation type="journal article" date="2003" name="Genome Res.">
        <title>Comparative complete genome sequence analysis of the amino acid replacements responsible for the thermostability of Corynebacterium efficiens.</title>
        <authorList>
            <person name="Nishio Y."/>
            <person name="Nakamura Y."/>
            <person name="Kawarabayasi Y."/>
            <person name="Usuda Y."/>
            <person name="Kimura E."/>
            <person name="Sugimoto S."/>
            <person name="Matsui K."/>
            <person name="Yamagishi A."/>
            <person name="Kikuchi H."/>
            <person name="Ikeo K."/>
            <person name="Gojobori T."/>
        </authorList>
    </citation>
    <scope>NUCLEOTIDE SEQUENCE [LARGE SCALE GENOMIC DNA]</scope>
    <source>
        <strain>DSM 44549 / YS-314 / AJ 12310 / JCM 11189 / NBRC 100395</strain>
    </source>
</reference>
<dbReference type="EC" id="3.1.21.10" evidence="1"/>
<dbReference type="EMBL" id="BA000035">
    <property type="protein sequence ID" value="BAC18585.1"/>
    <property type="status" value="ALT_INIT"/>
    <property type="molecule type" value="Genomic_DNA"/>
</dbReference>
<dbReference type="RefSeq" id="WP_006767772.1">
    <property type="nucleotide sequence ID" value="NC_004369.1"/>
</dbReference>
<dbReference type="SMR" id="Q8FPK3"/>
<dbReference type="STRING" id="196164.gene:10742196"/>
<dbReference type="KEGG" id="cef:CE1775"/>
<dbReference type="eggNOG" id="COG0817">
    <property type="taxonomic scope" value="Bacteria"/>
</dbReference>
<dbReference type="HOGENOM" id="CLU_091257_0_0_11"/>
<dbReference type="OrthoDB" id="9805499at2"/>
<dbReference type="Proteomes" id="UP000001409">
    <property type="component" value="Chromosome"/>
</dbReference>
<dbReference type="GO" id="GO:0005737">
    <property type="term" value="C:cytoplasm"/>
    <property type="evidence" value="ECO:0007669"/>
    <property type="project" value="UniProtKB-SubCell"/>
</dbReference>
<dbReference type="GO" id="GO:0048476">
    <property type="term" value="C:Holliday junction resolvase complex"/>
    <property type="evidence" value="ECO:0007669"/>
    <property type="project" value="UniProtKB-UniRule"/>
</dbReference>
<dbReference type="GO" id="GO:0008821">
    <property type="term" value="F:crossover junction DNA endonuclease activity"/>
    <property type="evidence" value="ECO:0007669"/>
    <property type="project" value="UniProtKB-UniRule"/>
</dbReference>
<dbReference type="GO" id="GO:0003677">
    <property type="term" value="F:DNA binding"/>
    <property type="evidence" value="ECO:0007669"/>
    <property type="project" value="UniProtKB-KW"/>
</dbReference>
<dbReference type="GO" id="GO:0000287">
    <property type="term" value="F:magnesium ion binding"/>
    <property type="evidence" value="ECO:0007669"/>
    <property type="project" value="UniProtKB-UniRule"/>
</dbReference>
<dbReference type="GO" id="GO:0006310">
    <property type="term" value="P:DNA recombination"/>
    <property type="evidence" value="ECO:0007669"/>
    <property type="project" value="UniProtKB-UniRule"/>
</dbReference>
<dbReference type="GO" id="GO:0006281">
    <property type="term" value="P:DNA repair"/>
    <property type="evidence" value="ECO:0007669"/>
    <property type="project" value="UniProtKB-UniRule"/>
</dbReference>
<dbReference type="CDD" id="cd16962">
    <property type="entry name" value="RuvC"/>
    <property type="match status" value="1"/>
</dbReference>
<dbReference type="FunFam" id="3.30.420.10:FF:000002">
    <property type="entry name" value="Crossover junction endodeoxyribonuclease RuvC"/>
    <property type="match status" value="1"/>
</dbReference>
<dbReference type="Gene3D" id="3.30.420.10">
    <property type="entry name" value="Ribonuclease H-like superfamily/Ribonuclease H"/>
    <property type="match status" value="1"/>
</dbReference>
<dbReference type="HAMAP" id="MF_00034">
    <property type="entry name" value="RuvC"/>
    <property type="match status" value="1"/>
</dbReference>
<dbReference type="InterPro" id="IPR012337">
    <property type="entry name" value="RNaseH-like_sf"/>
</dbReference>
<dbReference type="InterPro" id="IPR036397">
    <property type="entry name" value="RNaseH_sf"/>
</dbReference>
<dbReference type="InterPro" id="IPR020563">
    <property type="entry name" value="X-over_junc_endoDNase_Mg_BS"/>
</dbReference>
<dbReference type="InterPro" id="IPR002176">
    <property type="entry name" value="X-over_junc_endoDNase_RuvC"/>
</dbReference>
<dbReference type="NCBIfam" id="TIGR00228">
    <property type="entry name" value="ruvC"/>
    <property type="match status" value="1"/>
</dbReference>
<dbReference type="PANTHER" id="PTHR30194">
    <property type="entry name" value="CROSSOVER JUNCTION ENDODEOXYRIBONUCLEASE RUVC"/>
    <property type="match status" value="1"/>
</dbReference>
<dbReference type="PANTHER" id="PTHR30194:SF3">
    <property type="entry name" value="CROSSOVER JUNCTION ENDODEOXYRIBONUCLEASE RUVC"/>
    <property type="match status" value="1"/>
</dbReference>
<dbReference type="Pfam" id="PF02075">
    <property type="entry name" value="RuvC"/>
    <property type="match status" value="1"/>
</dbReference>
<dbReference type="PRINTS" id="PR00696">
    <property type="entry name" value="RSOLVASERUVC"/>
</dbReference>
<dbReference type="SUPFAM" id="SSF53098">
    <property type="entry name" value="Ribonuclease H-like"/>
    <property type="match status" value="1"/>
</dbReference>
<dbReference type="PROSITE" id="PS01321">
    <property type="entry name" value="RUVC"/>
    <property type="match status" value="1"/>
</dbReference>
<gene>
    <name evidence="1" type="primary">ruvC</name>
    <name type="ordered locus">CE1775</name>
</gene>
<protein>
    <recommendedName>
        <fullName evidence="1">Crossover junction endodeoxyribonuclease RuvC</fullName>
        <ecNumber evidence="1">3.1.21.10</ecNumber>
    </recommendedName>
    <alternativeName>
        <fullName evidence="1">Holliday junction nuclease RuvC</fullName>
    </alternativeName>
    <alternativeName>
        <fullName evidence="1">Holliday junction resolvase RuvC</fullName>
    </alternativeName>
</protein>
<sequence length="223" mass="24283">MNHEGLRVMGIDPGLTRCGLSVVQAGRGRTVYPVSVGVVRTPSDAELADRLLRLSQAVGEWMDDYTPDVIAIERVFERGNVSTVMNTAHAVGVLILAAAERGLPVHMYTPSEVKKAISGNGRADKKQMTVMITRILGLAEAPKPADAADALALAVCHCWRAPLLMRTRMTAVDLEHRRRQYQGKLGKAKSTLNARNNAQVTGDAQVRAGHPSQFERPDRADPR</sequence>
<accession>Q8FPK3</accession>
<evidence type="ECO:0000255" key="1">
    <source>
        <dbReference type="HAMAP-Rule" id="MF_00034"/>
    </source>
</evidence>
<evidence type="ECO:0000256" key="2">
    <source>
        <dbReference type="SAM" id="MobiDB-lite"/>
    </source>
</evidence>
<evidence type="ECO:0000305" key="3"/>
<organism>
    <name type="scientific">Corynebacterium efficiens (strain DSM 44549 / YS-314 / AJ 12310 / JCM 11189 / NBRC 100395)</name>
    <dbReference type="NCBI Taxonomy" id="196164"/>
    <lineage>
        <taxon>Bacteria</taxon>
        <taxon>Bacillati</taxon>
        <taxon>Actinomycetota</taxon>
        <taxon>Actinomycetes</taxon>
        <taxon>Mycobacteriales</taxon>
        <taxon>Corynebacteriaceae</taxon>
        <taxon>Corynebacterium</taxon>
    </lineage>
</organism>
<proteinExistence type="inferred from homology"/>
<keyword id="KW-0963">Cytoplasm</keyword>
<keyword id="KW-0227">DNA damage</keyword>
<keyword id="KW-0233">DNA recombination</keyword>
<keyword id="KW-0234">DNA repair</keyword>
<keyword id="KW-0238">DNA-binding</keyword>
<keyword id="KW-0255">Endonuclease</keyword>
<keyword id="KW-0378">Hydrolase</keyword>
<keyword id="KW-0460">Magnesium</keyword>
<keyword id="KW-0479">Metal-binding</keyword>
<keyword id="KW-0540">Nuclease</keyword>
<keyword id="KW-1185">Reference proteome</keyword>
<feature type="chain" id="PRO_0000183092" description="Crossover junction endodeoxyribonuclease RuvC">
    <location>
        <begin position="1"/>
        <end position="223"/>
    </location>
</feature>
<feature type="region of interest" description="Disordered" evidence="2">
    <location>
        <begin position="182"/>
        <end position="223"/>
    </location>
</feature>
<feature type="compositionally biased region" description="Polar residues" evidence="2">
    <location>
        <begin position="190"/>
        <end position="202"/>
    </location>
</feature>
<feature type="compositionally biased region" description="Basic and acidic residues" evidence="2">
    <location>
        <begin position="213"/>
        <end position="223"/>
    </location>
</feature>
<feature type="active site" evidence="1">
    <location>
        <position position="12"/>
    </location>
</feature>
<feature type="active site" evidence="1">
    <location>
        <position position="73"/>
    </location>
</feature>
<feature type="active site" evidence="1">
    <location>
        <position position="146"/>
    </location>
</feature>
<feature type="binding site" evidence="1">
    <location>
        <position position="12"/>
    </location>
    <ligand>
        <name>Mg(2+)</name>
        <dbReference type="ChEBI" id="CHEBI:18420"/>
        <label>1</label>
    </ligand>
</feature>
<feature type="binding site" evidence="1">
    <location>
        <position position="73"/>
    </location>
    <ligand>
        <name>Mg(2+)</name>
        <dbReference type="ChEBI" id="CHEBI:18420"/>
        <label>2</label>
    </ligand>
</feature>
<feature type="binding site" evidence="1">
    <location>
        <position position="146"/>
    </location>
    <ligand>
        <name>Mg(2+)</name>
        <dbReference type="ChEBI" id="CHEBI:18420"/>
        <label>1</label>
    </ligand>
</feature>